<sequence>MDSARALIARGWGVSLVSRCLRVSRAQLHVILRRTDDWMDGRRSRHTDDTDVLLRIHHVIGELPTYGYRRVWALLRRQAELDGMPAINAKRVYRIMRQNALLLERKPAVPPSKRAHTGRVAVKESNQRWCSDGFEFCCDNGERLRVTFALDCCDREALHWAVTTGGFNSETVQDVMLGAVERRFGNDLPSSPVEWLTDNGSCYRANETRQFARMLGLEPKNTAVRSPESNGIAESFVKTIKRDYISIMPKPDGLTAAKNLAEAFEHYNEWHPHSALGYRSPREYLRQRACNGLSDNRCLEI</sequence>
<proteinExistence type="predicted"/>
<organism>
    <name type="scientific">Escherichia coli (strain K12)</name>
    <dbReference type="NCBI Taxonomy" id="83333"/>
    <lineage>
        <taxon>Bacteria</taxon>
        <taxon>Pseudomonadati</taxon>
        <taxon>Pseudomonadota</taxon>
        <taxon>Gammaproteobacteria</taxon>
        <taxon>Enterobacterales</taxon>
        <taxon>Enterobacteriaceae</taxon>
        <taxon>Escherichia</taxon>
    </lineage>
</organism>
<comment type="function">
    <text>Involved in the transposition of the insertion sequence IS2.</text>
</comment>
<name>INSD6_ECOLI</name>
<evidence type="ECO:0000255" key="1">
    <source>
        <dbReference type="PROSITE-ProRule" id="PRU00457"/>
    </source>
</evidence>
<feature type="chain" id="PRO_0000393577" description="Transposase InsD for insertion element IS2K">
    <location>
        <begin position="1"/>
        <end position="301"/>
    </location>
</feature>
<feature type="domain" description="Integrase catalytic" evidence="1">
    <location>
        <begin position="106"/>
        <end position="289"/>
    </location>
</feature>
<gene>
    <name type="primary">insD6</name>
    <name type="ordered locus">b4273</name>
    <name type="ordered locus">JW4230</name>
</gene>
<keyword id="KW-0233">DNA recombination</keyword>
<keyword id="KW-0238">DNA-binding</keyword>
<keyword id="KW-1185">Reference proteome</keyword>
<keyword id="KW-0814">Transposable element</keyword>
<keyword id="KW-0815">Transposition</keyword>
<protein>
    <recommendedName>
        <fullName>Transposase InsD for insertion element IS2K</fullName>
    </recommendedName>
</protein>
<accession>P0CF58</accession>
<accession>P0C5W4</accession>
<accession>P19777</accession>
<accession>P76167</accession>
<accession>P76916</accession>
<accession>P77033</accession>
<accession>Q79EJ0</accession>
<dbReference type="EMBL" id="U14003">
    <property type="protein sequence ID" value="AAA97169.1"/>
    <property type="molecule type" value="Genomic_DNA"/>
</dbReference>
<dbReference type="EMBL" id="U00096">
    <property type="protein sequence ID" value="AAC77229.1"/>
    <property type="molecule type" value="Genomic_DNA"/>
</dbReference>
<dbReference type="EMBL" id="AP009048">
    <property type="protein sequence ID" value="BAE78269.1"/>
    <property type="molecule type" value="Genomic_DNA"/>
</dbReference>
<dbReference type="PIR" id="A64764">
    <property type="entry name" value="C65092"/>
</dbReference>
<dbReference type="RefSeq" id="NP_061399.1">
    <property type="nucleotide sequence ID" value="NC_002483.1"/>
</dbReference>
<dbReference type="RefSeq" id="NP_418693.1">
    <property type="nucleotide sequence ID" value="NC_000913.3"/>
</dbReference>
<dbReference type="SMR" id="P0CF58"/>
<dbReference type="FunCoup" id="P0CF58">
    <property type="interactions" value="8"/>
</dbReference>
<dbReference type="EnsemblBacteria" id="AAC77229">
    <property type="protein sequence ID" value="AAC77229"/>
    <property type="gene ID" value="b4273"/>
</dbReference>
<dbReference type="GeneID" id="948779"/>
<dbReference type="KEGG" id="ecj:JW4230"/>
<dbReference type="KEGG" id="eco:b0361"/>
<dbReference type="KEGG" id="eco:b1402"/>
<dbReference type="KEGG" id="eco:b1996"/>
<dbReference type="KEGG" id="eco:b2860"/>
<dbReference type="KEGG" id="eco:b3045"/>
<dbReference type="KEGG" id="eco:b4273"/>
<dbReference type="KEGG" id="ecoc:C3026_00665"/>
<dbReference type="KEGG" id="ecoc:C3026_03835"/>
<dbReference type="KEGG" id="ecoc:C3026_06240"/>
<dbReference type="KEGG" id="ecoc:C3026_08175"/>
<dbReference type="KEGG" id="ecoc:C3026_11260"/>
<dbReference type="KEGG" id="ecoc:C3026_15300"/>
<dbReference type="KEGG" id="ecoc:C3026_15695"/>
<dbReference type="KEGG" id="ecoc:C3026_16630"/>
<dbReference type="KEGG" id="ecoc:C3026_23045"/>
<dbReference type="KEGG" id="ecoc:C3026_24215"/>
<dbReference type="PATRIC" id="fig|511145.12.peg.1465"/>
<dbReference type="EchoBASE" id="EB4712"/>
<dbReference type="HOGENOM" id="CLU_052819_0_0_6"/>
<dbReference type="InParanoid" id="P0CF58"/>
<dbReference type="OMA" id="CHDREAI"/>
<dbReference type="PhylomeDB" id="P0CF58"/>
<dbReference type="BioCyc" id="EcoCyc:MONOMER0-4451"/>
<dbReference type="PRO" id="PR:P0CF58"/>
<dbReference type="Proteomes" id="UP000000625">
    <property type="component" value="Chromosome"/>
</dbReference>
<dbReference type="GO" id="GO:0003677">
    <property type="term" value="F:DNA binding"/>
    <property type="evidence" value="ECO:0007669"/>
    <property type="project" value="UniProtKB-KW"/>
</dbReference>
<dbReference type="GO" id="GO:0015074">
    <property type="term" value="P:DNA integration"/>
    <property type="evidence" value="ECO:0007669"/>
    <property type="project" value="InterPro"/>
</dbReference>
<dbReference type="GO" id="GO:0006310">
    <property type="term" value="P:DNA recombination"/>
    <property type="evidence" value="ECO:0007669"/>
    <property type="project" value="UniProtKB-KW"/>
</dbReference>
<dbReference type="GO" id="GO:0032196">
    <property type="term" value="P:transposition"/>
    <property type="evidence" value="ECO:0007669"/>
    <property type="project" value="UniProtKB-KW"/>
</dbReference>
<dbReference type="Gene3D" id="3.30.420.10">
    <property type="entry name" value="Ribonuclease H-like superfamily/Ribonuclease H"/>
    <property type="match status" value="1"/>
</dbReference>
<dbReference type="InterPro" id="IPR025948">
    <property type="entry name" value="HTH-like_dom"/>
</dbReference>
<dbReference type="InterPro" id="IPR001584">
    <property type="entry name" value="Integrase_cat-core"/>
</dbReference>
<dbReference type="InterPro" id="IPR012337">
    <property type="entry name" value="RNaseH-like_sf"/>
</dbReference>
<dbReference type="InterPro" id="IPR036397">
    <property type="entry name" value="RNaseH_sf"/>
</dbReference>
<dbReference type="InterPro" id="IPR048020">
    <property type="entry name" value="Transpos_IS3"/>
</dbReference>
<dbReference type="NCBIfam" id="NF006918">
    <property type="entry name" value="PRK09409.1"/>
    <property type="match status" value="1"/>
</dbReference>
<dbReference type="NCBIfam" id="NF033516">
    <property type="entry name" value="transpos_IS3"/>
    <property type="match status" value="1"/>
</dbReference>
<dbReference type="PANTHER" id="PTHR37936">
    <property type="entry name" value="TRANSPOSASE INSC FOR INSERTION ELEMENT IS2A-RELATED"/>
    <property type="match status" value="1"/>
</dbReference>
<dbReference type="PANTHER" id="PTHR37936:SF3">
    <property type="entry name" value="TRANSPOSASE INSC FOR INSERTION ELEMENT IS2A-RELATED"/>
    <property type="match status" value="1"/>
</dbReference>
<dbReference type="Pfam" id="PF13276">
    <property type="entry name" value="HTH_21"/>
    <property type="match status" value="1"/>
</dbReference>
<dbReference type="Pfam" id="PF00665">
    <property type="entry name" value="rve"/>
    <property type="match status" value="1"/>
</dbReference>
<dbReference type="SUPFAM" id="SSF53098">
    <property type="entry name" value="Ribonuclease H-like"/>
    <property type="match status" value="1"/>
</dbReference>
<dbReference type="PROSITE" id="PS50994">
    <property type="entry name" value="INTEGRASE"/>
    <property type="match status" value="1"/>
</dbReference>
<reference key="1">
    <citation type="journal article" date="1995" name="Nucleic Acids Res.">
        <title>Analysis of the Escherichia coli genome VI: DNA sequence of the region from 92.8 through 100 minutes.</title>
        <authorList>
            <person name="Burland V.D."/>
            <person name="Plunkett G. III"/>
            <person name="Sofia H.J."/>
            <person name="Daniels D.L."/>
            <person name="Blattner F.R."/>
        </authorList>
    </citation>
    <scope>NUCLEOTIDE SEQUENCE [LARGE SCALE GENOMIC DNA]</scope>
    <source>
        <strain>K12 / MG1655 / ATCC 47076</strain>
    </source>
</reference>
<reference key="2">
    <citation type="journal article" date="1997" name="Science">
        <title>The complete genome sequence of Escherichia coli K-12.</title>
        <authorList>
            <person name="Blattner F.R."/>
            <person name="Plunkett G. III"/>
            <person name="Bloch C.A."/>
            <person name="Perna N.T."/>
            <person name="Burland V."/>
            <person name="Riley M."/>
            <person name="Collado-Vides J."/>
            <person name="Glasner J.D."/>
            <person name="Rode C.K."/>
            <person name="Mayhew G.F."/>
            <person name="Gregor J."/>
            <person name="Davis N.W."/>
            <person name="Kirkpatrick H.A."/>
            <person name="Goeden M.A."/>
            <person name="Rose D.J."/>
            <person name="Mau B."/>
            <person name="Shao Y."/>
        </authorList>
    </citation>
    <scope>NUCLEOTIDE SEQUENCE [LARGE SCALE GENOMIC DNA]</scope>
    <source>
        <strain>K12 / MG1655 / ATCC 47076</strain>
    </source>
</reference>
<reference key="3">
    <citation type="journal article" date="2006" name="Mol. Syst. Biol.">
        <title>Highly accurate genome sequences of Escherichia coli K-12 strains MG1655 and W3110.</title>
        <authorList>
            <person name="Hayashi K."/>
            <person name="Morooka N."/>
            <person name="Yamamoto Y."/>
            <person name="Fujita K."/>
            <person name="Isono K."/>
            <person name="Choi S."/>
            <person name="Ohtsubo E."/>
            <person name="Baba T."/>
            <person name="Wanner B.L."/>
            <person name="Mori H."/>
            <person name="Horiuchi T."/>
        </authorList>
    </citation>
    <scope>NUCLEOTIDE SEQUENCE [LARGE SCALE GENOMIC DNA]</scope>
    <source>
        <strain>K12 / W3110 / ATCC 27325 / DSM 5911</strain>
    </source>
</reference>